<reference key="1">
    <citation type="journal article" date="2005" name="Eur. J. Immunol.">
        <title>Variety of antimicrobial peptides in the Bombina maxima toad and evidence of their rapid diversification.</title>
        <authorList>
            <person name="Lee W.-H."/>
            <person name="Li Y."/>
            <person name="Lai R."/>
            <person name="Li S."/>
            <person name="Zhang Y."/>
            <person name="Wang W."/>
        </authorList>
    </citation>
    <scope>NUCLEOTIDE SEQUENCE [MRNA]</scope>
    <scope>PROTEIN SEQUENCE OF 44-70 AND 124-143</scope>
    <scope>AMIDATION AT SER-70 AND LEU-143</scope>
    <source>
        <tissue>Skin</tissue>
    </source>
</reference>
<evidence type="ECO:0000250" key="1"/>
<evidence type="ECO:0000255" key="2"/>
<evidence type="ECO:0000269" key="3">
    <source>
    </source>
</evidence>
<evidence type="ECO:0000305" key="4"/>
<feature type="signal peptide" evidence="2">
    <location>
        <begin position="1"/>
        <end position="18"/>
    </location>
</feature>
<feature type="propeptide" id="PRO_0000003224" evidence="1">
    <location>
        <begin position="19"/>
        <end position="43"/>
    </location>
</feature>
<feature type="peptide" id="PRO_0000003225" description="Maximin-10">
    <location>
        <begin position="44"/>
        <end position="70"/>
    </location>
</feature>
<feature type="propeptide" id="PRO_0000003226" evidence="1">
    <location>
        <begin position="74"/>
        <end position="123"/>
    </location>
</feature>
<feature type="peptide" id="PRO_0000003227" description="Maximin-H15">
    <location>
        <begin position="124"/>
        <end position="143"/>
    </location>
</feature>
<feature type="modified residue" description="Serine amide" evidence="3">
    <location>
        <position position="70"/>
    </location>
</feature>
<feature type="modified residue" description="Leucine amide" evidence="3">
    <location>
        <position position="143"/>
    </location>
</feature>
<comment type="function">
    <text evidence="1">Maximin-10 shows antimicrobial activity against bacteria and against the fungus C.albicans. It has little hemolytic activity (By similarity).</text>
</comment>
<comment type="function">
    <text evidence="1">Maximin-H15 shows antimicrobial activity against bacteria and against the fungus C.albicans. Shows strong hemolytic activity (By similarity).</text>
</comment>
<comment type="subcellular location">
    <subcellularLocation>
        <location>Secreted</location>
    </subcellularLocation>
</comment>
<comment type="tissue specificity">
    <text>Expressed by the skin glands.</text>
</comment>
<comment type="similarity">
    <text evidence="4">Belongs to the bombinin family.</text>
</comment>
<name>M1015_BOMMX</name>
<keyword id="KW-0027">Amidation</keyword>
<keyword id="KW-0878">Amphibian defense peptide</keyword>
<keyword id="KW-0044">Antibiotic</keyword>
<keyword id="KW-0929">Antimicrobial</keyword>
<keyword id="KW-0165">Cleavage on pair of basic residues</keyword>
<keyword id="KW-0204">Cytolysis</keyword>
<keyword id="KW-0903">Direct protein sequencing</keyword>
<keyword id="KW-0295">Fungicide</keyword>
<keyword id="KW-0354">Hemolysis</keyword>
<keyword id="KW-0964">Secreted</keyword>
<keyword id="KW-0732">Signal</keyword>
<sequence>MNFKYIVAVSFLIASAYARSVQNDEQSLSQRDVLEEESLREIRGIGGALLSAGKSALKGLAKGLAEHFASGKRTAEDHEVMKRLEAVMRDLDSLDYPEEATERETRGFNQEEIANLFTKKEKRILGPVLGLVGNALGGLLKNLG</sequence>
<dbReference type="EMBL" id="AY849021">
    <property type="protein sequence ID" value="AAX50242.1"/>
    <property type="molecule type" value="mRNA"/>
</dbReference>
<dbReference type="SMR" id="Q58T39"/>
<dbReference type="GO" id="GO:0005576">
    <property type="term" value="C:extracellular region"/>
    <property type="evidence" value="ECO:0007669"/>
    <property type="project" value="UniProtKB-SubCell"/>
</dbReference>
<dbReference type="GO" id="GO:0042742">
    <property type="term" value="P:defense response to bacterium"/>
    <property type="evidence" value="ECO:0007669"/>
    <property type="project" value="UniProtKB-KW"/>
</dbReference>
<dbReference type="GO" id="GO:0050832">
    <property type="term" value="P:defense response to fungus"/>
    <property type="evidence" value="ECO:0007669"/>
    <property type="project" value="UniProtKB-KW"/>
</dbReference>
<dbReference type="GO" id="GO:0031640">
    <property type="term" value="P:killing of cells of another organism"/>
    <property type="evidence" value="ECO:0007669"/>
    <property type="project" value="UniProtKB-KW"/>
</dbReference>
<dbReference type="InterPro" id="IPR007962">
    <property type="entry name" value="Bombinin"/>
</dbReference>
<dbReference type="Pfam" id="PF05298">
    <property type="entry name" value="Bombinin"/>
    <property type="match status" value="1"/>
</dbReference>
<accession>Q58T39</accession>
<organism>
    <name type="scientific">Bombina maxima</name>
    <name type="common">Giant fire-bellied toad</name>
    <name type="synonym">Chinese red belly toad</name>
    <dbReference type="NCBI Taxonomy" id="161274"/>
    <lineage>
        <taxon>Eukaryota</taxon>
        <taxon>Metazoa</taxon>
        <taxon>Chordata</taxon>
        <taxon>Craniata</taxon>
        <taxon>Vertebrata</taxon>
        <taxon>Euteleostomi</taxon>
        <taxon>Amphibia</taxon>
        <taxon>Batrachia</taxon>
        <taxon>Anura</taxon>
        <taxon>Bombinatoridae</taxon>
        <taxon>Bombina</taxon>
    </lineage>
</organism>
<proteinExistence type="evidence at protein level"/>
<protein>
    <recommendedName>
        <fullName>Maximins 10/H15</fullName>
    </recommendedName>
    <component>
        <recommendedName>
            <fullName>Maximin-10</fullName>
        </recommendedName>
    </component>
    <component>
        <recommendedName>
            <fullName>Maximin-H15</fullName>
        </recommendedName>
    </component>
</protein>